<evidence type="ECO:0000255" key="1">
    <source>
        <dbReference type="HAMAP-Rule" id="MF_01347"/>
    </source>
</evidence>
<reference key="1">
    <citation type="journal article" date="2006" name="Appl. Environ. Microbiol.">
        <title>Complete genome sequence of the marine, chemolithoautotrophic, ammonia-oxidizing bacterium Nitrosococcus oceani ATCC 19707.</title>
        <authorList>
            <person name="Klotz M.G."/>
            <person name="Arp D.J."/>
            <person name="Chain P.S.G."/>
            <person name="El-Sheikh A.F."/>
            <person name="Hauser L.J."/>
            <person name="Hommes N.G."/>
            <person name="Larimer F.W."/>
            <person name="Malfatti S.A."/>
            <person name="Norton J.M."/>
            <person name="Poret-Peterson A.T."/>
            <person name="Vergez L.M."/>
            <person name="Ward B.B."/>
        </authorList>
    </citation>
    <scope>NUCLEOTIDE SEQUENCE [LARGE SCALE GENOMIC DNA]</scope>
    <source>
        <strain>ATCC 19707 / BCRC 17464 / JCM 30415 / NCIMB 11848 / C-107</strain>
    </source>
</reference>
<feature type="chain" id="PRO_0000254317" description="ATP synthase subunit beta">
    <location>
        <begin position="1"/>
        <end position="458"/>
    </location>
</feature>
<feature type="binding site" evidence="1">
    <location>
        <begin position="148"/>
        <end position="155"/>
    </location>
    <ligand>
        <name>ATP</name>
        <dbReference type="ChEBI" id="CHEBI:30616"/>
    </ligand>
</feature>
<dbReference type="EC" id="7.1.2.2" evidence="1"/>
<dbReference type="EMBL" id="CP000127">
    <property type="protein sequence ID" value="ABA59515.1"/>
    <property type="molecule type" value="Genomic_DNA"/>
</dbReference>
<dbReference type="RefSeq" id="WP_002813568.1">
    <property type="nucleotide sequence ID" value="NC_007484.1"/>
</dbReference>
<dbReference type="SMR" id="Q3J6N1"/>
<dbReference type="FunCoup" id="Q3J6N1">
    <property type="interactions" value="449"/>
</dbReference>
<dbReference type="STRING" id="323261.Noc_3074"/>
<dbReference type="KEGG" id="noc:Noc_3074"/>
<dbReference type="eggNOG" id="COG0055">
    <property type="taxonomic scope" value="Bacteria"/>
</dbReference>
<dbReference type="HOGENOM" id="CLU_022398_0_2_6"/>
<dbReference type="InParanoid" id="Q3J6N1"/>
<dbReference type="Proteomes" id="UP000006838">
    <property type="component" value="Chromosome"/>
</dbReference>
<dbReference type="GO" id="GO:0005886">
    <property type="term" value="C:plasma membrane"/>
    <property type="evidence" value="ECO:0007669"/>
    <property type="project" value="UniProtKB-SubCell"/>
</dbReference>
<dbReference type="GO" id="GO:0045259">
    <property type="term" value="C:proton-transporting ATP synthase complex"/>
    <property type="evidence" value="ECO:0007669"/>
    <property type="project" value="UniProtKB-KW"/>
</dbReference>
<dbReference type="GO" id="GO:0005524">
    <property type="term" value="F:ATP binding"/>
    <property type="evidence" value="ECO:0007669"/>
    <property type="project" value="UniProtKB-UniRule"/>
</dbReference>
<dbReference type="GO" id="GO:0016887">
    <property type="term" value="F:ATP hydrolysis activity"/>
    <property type="evidence" value="ECO:0007669"/>
    <property type="project" value="InterPro"/>
</dbReference>
<dbReference type="GO" id="GO:0046933">
    <property type="term" value="F:proton-transporting ATP synthase activity, rotational mechanism"/>
    <property type="evidence" value="ECO:0007669"/>
    <property type="project" value="UniProtKB-UniRule"/>
</dbReference>
<dbReference type="CDD" id="cd18110">
    <property type="entry name" value="ATP-synt_F1_beta_C"/>
    <property type="match status" value="1"/>
</dbReference>
<dbReference type="CDD" id="cd18115">
    <property type="entry name" value="ATP-synt_F1_beta_N"/>
    <property type="match status" value="1"/>
</dbReference>
<dbReference type="CDD" id="cd01133">
    <property type="entry name" value="F1-ATPase_beta_CD"/>
    <property type="match status" value="1"/>
</dbReference>
<dbReference type="FunFam" id="1.10.1140.10:FF:000001">
    <property type="entry name" value="ATP synthase subunit beta"/>
    <property type="match status" value="1"/>
</dbReference>
<dbReference type="FunFam" id="3.40.50.300:FF:000004">
    <property type="entry name" value="ATP synthase subunit beta"/>
    <property type="match status" value="1"/>
</dbReference>
<dbReference type="Gene3D" id="2.40.10.170">
    <property type="match status" value="1"/>
</dbReference>
<dbReference type="Gene3D" id="1.10.1140.10">
    <property type="entry name" value="Bovine Mitochondrial F1-atpase, Atp Synthase Beta Chain, Chain D, domain 3"/>
    <property type="match status" value="1"/>
</dbReference>
<dbReference type="Gene3D" id="3.40.50.300">
    <property type="entry name" value="P-loop containing nucleotide triphosphate hydrolases"/>
    <property type="match status" value="1"/>
</dbReference>
<dbReference type="HAMAP" id="MF_01347">
    <property type="entry name" value="ATP_synth_beta_bact"/>
    <property type="match status" value="1"/>
</dbReference>
<dbReference type="InterPro" id="IPR003593">
    <property type="entry name" value="AAA+_ATPase"/>
</dbReference>
<dbReference type="InterPro" id="IPR055190">
    <property type="entry name" value="ATP-synt_VA_C"/>
</dbReference>
<dbReference type="InterPro" id="IPR005722">
    <property type="entry name" value="ATP_synth_F1_bsu"/>
</dbReference>
<dbReference type="InterPro" id="IPR020003">
    <property type="entry name" value="ATPase_a/bsu_AS"/>
</dbReference>
<dbReference type="InterPro" id="IPR050053">
    <property type="entry name" value="ATPase_alpha/beta_chains"/>
</dbReference>
<dbReference type="InterPro" id="IPR004100">
    <property type="entry name" value="ATPase_F1/V1/A1_a/bsu_N"/>
</dbReference>
<dbReference type="InterPro" id="IPR036121">
    <property type="entry name" value="ATPase_F1/V1/A1_a/bsu_N_sf"/>
</dbReference>
<dbReference type="InterPro" id="IPR000194">
    <property type="entry name" value="ATPase_F1/V1/A1_a/bsu_nucl-bd"/>
</dbReference>
<dbReference type="InterPro" id="IPR024034">
    <property type="entry name" value="ATPase_F1/V1_b/a_C"/>
</dbReference>
<dbReference type="InterPro" id="IPR027417">
    <property type="entry name" value="P-loop_NTPase"/>
</dbReference>
<dbReference type="NCBIfam" id="TIGR01039">
    <property type="entry name" value="atpD"/>
    <property type="match status" value="1"/>
</dbReference>
<dbReference type="PANTHER" id="PTHR15184">
    <property type="entry name" value="ATP SYNTHASE"/>
    <property type="match status" value="1"/>
</dbReference>
<dbReference type="PANTHER" id="PTHR15184:SF71">
    <property type="entry name" value="ATP SYNTHASE SUBUNIT BETA, MITOCHONDRIAL"/>
    <property type="match status" value="1"/>
</dbReference>
<dbReference type="Pfam" id="PF00006">
    <property type="entry name" value="ATP-synt_ab"/>
    <property type="match status" value="1"/>
</dbReference>
<dbReference type="Pfam" id="PF02874">
    <property type="entry name" value="ATP-synt_ab_N"/>
    <property type="match status" value="1"/>
</dbReference>
<dbReference type="Pfam" id="PF22919">
    <property type="entry name" value="ATP-synt_VA_C"/>
    <property type="match status" value="1"/>
</dbReference>
<dbReference type="SMART" id="SM00382">
    <property type="entry name" value="AAA"/>
    <property type="match status" value="1"/>
</dbReference>
<dbReference type="SUPFAM" id="SSF47917">
    <property type="entry name" value="C-terminal domain of alpha and beta subunits of F1 ATP synthase"/>
    <property type="match status" value="1"/>
</dbReference>
<dbReference type="SUPFAM" id="SSF50615">
    <property type="entry name" value="N-terminal domain of alpha and beta subunits of F1 ATP synthase"/>
    <property type="match status" value="1"/>
</dbReference>
<dbReference type="SUPFAM" id="SSF52540">
    <property type="entry name" value="P-loop containing nucleoside triphosphate hydrolases"/>
    <property type="match status" value="1"/>
</dbReference>
<dbReference type="PROSITE" id="PS00152">
    <property type="entry name" value="ATPASE_ALPHA_BETA"/>
    <property type="match status" value="1"/>
</dbReference>
<sequence>MSTGKTVQIIGAVVDVEFPRESIPKVYHALRIDDVGLTLEVQQQLGDGVVRTIAMGGSDGLRRGMAVTNTGAPISVPVGTKTLGRIMDVLGEPVDEAGPVGEEERWSIHRKAPAYEELSPATELLETGIKVIDLICPFAKGGKVGLFGGAGVGKTVNMMELIRNIATEHSGYSVFAGVGERTREGNDFYHEMKDSQVLDKVSLVYGQMNEPPGNRLRVALTGLTMAEFFREEGRDVLLFVDNIYRYTLAGTEVSALLGRMPSAVGYQPTLAEEMGVLQERITSTKTGSITSIQAVYVPADDLTDPSPATTFAHLDATVVLSRQIAELGIYPAVDPLDSTSRQLDPLIVGQEHYQVARAVQGNLQRYKELKDIIAILGMDELSEEDKLTVSRARKIQRFLSQPFFVAEVFTGSPGKYVPLKETIQSFKGIVEGEYDHLPEQAFYMVGTIDEAVEKAKKL</sequence>
<accession>Q3J6N1</accession>
<protein>
    <recommendedName>
        <fullName evidence="1">ATP synthase subunit beta</fullName>
        <ecNumber evidence="1">7.1.2.2</ecNumber>
    </recommendedName>
    <alternativeName>
        <fullName evidence="1">ATP synthase F1 sector subunit beta</fullName>
    </alternativeName>
    <alternativeName>
        <fullName evidence="1">F-ATPase subunit beta</fullName>
    </alternativeName>
</protein>
<proteinExistence type="inferred from homology"/>
<name>ATPB_NITOC</name>
<organism>
    <name type="scientific">Nitrosococcus oceani (strain ATCC 19707 / BCRC 17464 / JCM 30415 / NCIMB 11848 / C-107)</name>
    <dbReference type="NCBI Taxonomy" id="323261"/>
    <lineage>
        <taxon>Bacteria</taxon>
        <taxon>Pseudomonadati</taxon>
        <taxon>Pseudomonadota</taxon>
        <taxon>Gammaproteobacteria</taxon>
        <taxon>Chromatiales</taxon>
        <taxon>Chromatiaceae</taxon>
        <taxon>Nitrosococcus</taxon>
    </lineage>
</organism>
<comment type="function">
    <text evidence="1">Produces ATP from ADP in the presence of a proton gradient across the membrane. The catalytic sites are hosted primarily by the beta subunits.</text>
</comment>
<comment type="catalytic activity">
    <reaction evidence="1">
        <text>ATP + H2O + 4 H(+)(in) = ADP + phosphate + 5 H(+)(out)</text>
        <dbReference type="Rhea" id="RHEA:57720"/>
        <dbReference type="ChEBI" id="CHEBI:15377"/>
        <dbReference type="ChEBI" id="CHEBI:15378"/>
        <dbReference type="ChEBI" id="CHEBI:30616"/>
        <dbReference type="ChEBI" id="CHEBI:43474"/>
        <dbReference type="ChEBI" id="CHEBI:456216"/>
        <dbReference type="EC" id="7.1.2.2"/>
    </reaction>
</comment>
<comment type="subunit">
    <text evidence="1">F-type ATPases have 2 components, CF(1) - the catalytic core - and CF(0) - the membrane proton channel. CF(1) has five subunits: alpha(3), beta(3), gamma(1), delta(1), epsilon(1). CF(0) has three main subunits: a(1), b(2) and c(9-12). The alpha and beta chains form an alternating ring which encloses part of the gamma chain. CF(1) is attached to CF(0) by a central stalk formed by the gamma and epsilon chains, while a peripheral stalk is formed by the delta and b chains.</text>
</comment>
<comment type="subcellular location">
    <subcellularLocation>
        <location evidence="1">Cell inner membrane</location>
        <topology evidence="1">Peripheral membrane protein</topology>
    </subcellularLocation>
</comment>
<comment type="similarity">
    <text evidence="1">Belongs to the ATPase alpha/beta chains family.</text>
</comment>
<gene>
    <name evidence="1" type="primary">atpD</name>
    <name type="ordered locus">Noc_3074</name>
</gene>
<keyword id="KW-0066">ATP synthesis</keyword>
<keyword id="KW-0067">ATP-binding</keyword>
<keyword id="KW-0997">Cell inner membrane</keyword>
<keyword id="KW-1003">Cell membrane</keyword>
<keyword id="KW-0139">CF(1)</keyword>
<keyword id="KW-0375">Hydrogen ion transport</keyword>
<keyword id="KW-0406">Ion transport</keyword>
<keyword id="KW-0472">Membrane</keyword>
<keyword id="KW-0547">Nucleotide-binding</keyword>
<keyword id="KW-1185">Reference proteome</keyword>
<keyword id="KW-1278">Translocase</keyword>
<keyword id="KW-0813">Transport</keyword>